<evidence type="ECO:0000255" key="1">
    <source>
        <dbReference type="HAMAP-Rule" id="MF_00294"/>
    </source>
</evidence>
<evidence type="ECO:0000305" key="2"/>
<protein>
    <recommendedName>
        <fullName evidence="1">Large ribosomal subunit protein bL33</fullName>
    </recommendedName>
    <alternativeName>
        <fullName evidence="2">50S ribosomal protein L33</fullName>
    </alternativeName>
</protein>
<reference key="1">
    <citation type="journal article" date="2003" name="Lancet">
        <title>Sequencing and analysis of the genome of the Whipple's disease bacterium Tropheryma whipplei.</title>
        <authorList>
            <person name="Bentley S.D."/>
            <person name="Maiwald M."/>
            <person name="Murphy L.D."/>
            <person name="Pallen M.J."/>
            <person name="Yeats C.A."/>
            <person name="Dover L.G."/>
            <person name="Norbertczak H.T."/>
            <person name="Besra G.S."/>
            <person name="Quail M.A."/>
            <person name="Harris D.E."/>
            <person name="von Herbay A."/>
            <person name="Goble A."/>
            <person name="Rutter S."/>
            <person name="Squares R."/>
            <person name="Squares S."/>
            <person name="Barrell B.G."/>
            <person name="Parkhill J."/>
            <person name="Relman D.A."/>
        </authorList>
    </citation>
    <scope>NUCLEOTIDE SEQUENCE [LARGE SCALE GENOMIC DNA]</scope>
    <source>
        <strain>TW08/27</strain>
    </source>
</reference>
<name>RL33_TROW8</name>
<proteinExistence type="inferred from homology"/>
<feature type="chain" id="PRO_1000004208" description="Large ribosomal subunit protein bL33">
    <location>
        <begin position="1"/>
        <end position="56"/>
    </location>
</feature>
<accession>Q83IB5</accession>
<organism>
    <name type="scientific">Tropheryma whipplei (strain TW08/27)</name>
    <name type="common">Whipple's bacillus</name>
    <dbReference type="NCBI Taxonomy" id="218496"/>
    <lineage>
        <taxon>Bacteria</taxon>
        <taxon>Bacillati</taxon>
        <taxon>Actinomycetota</taxon>
        <taxon>Actinomycetes</taxon>
        <taxon>Micrococcales</taxon>
        <taxon>Tropherymataceae</taxon>
        <taxon>Tropheryma</taxon>
    </lineage>
</organism>
<keyword id="KW-0687">Ribonucleoprotein</keyword>
<keyword id="KW-0689">Ribosomal protein</keyword>
<sequence length="56" mass="6814">MARKRQDVRPIVKLKSTAGTGFTYVTRKNRRNDPDRIVLKKYDPIIRRHTEFREER</sequence>
<dbReference type="EMBL" id="BX251410">
    <property type="protein sequence ID" value="CAD66806.1"/>
    <property type="molecule type" value="Genomic_DNA"/>
</dbReference>
<dbReference type="RefSeq" id="WP_011096087.1">
    <property type="nucleotide sequence ID" value="NC_004551.1"/>
</dbReference>
<dbReference type="SMR" id="Q83IB5"/>
<dbReference type="GeneID" id="67387898"/>
<dbReference type="KEGG" id="tws:TW126"/>
<dbReference type="HOGENOM" id="CLU_190949_1_1_11"/>
<dbReference type="GO" id="GO:0022625">
    <property type="term" value="C:cytosolic large ribosomal subunit"/>
    <property type="evidence" value="ECO:0007669"/>
    <property type="project" value="TreeGrafter"/>
</dbReference>
<dbReference type="GO" id="GO:0003735">
    <property type="term" value="F:structural constituent of ribosome"/>
    <property type="evidence" value="ECO:0007669"/>
    <property type="project" value="InterPro"/>
</dbReference>
<dbReference type="GO" id="GO:0006412">
    <property type="term" value="P:translation"/>
    <property type="evidence" value="ECO:0007669"/>
    <property type="project" value="UniProtKB-UniRule"/>
</dbReference>
<dbReference type="Gene3D" id="2.20.28.120">
    <property type="entry name" value="Ribosomal protein L33"/>
    <property type="match status" value="1"/>
</dbReference>
<dbReference type="HAMAP" id="MF_00294">
    <property type="entry name" value="Ribosomal_bL33"/>
    <property type="match status" value="1"/>
</dbReference>
<dbReference type="InterPro" id="IPR001705">
    <property type="entry name" value="Ribosomal_bL33"/>
</dbReference>
<dbReference type="InterPro" id="IPR018264">
    <property type="entry name" value="Ribosomal_bL33_CS"/>
</dbReference>
<dbReference type="InterPro" id="IPR038584">
    <property type="entry name" value="Ribosomal_bL33_sf"/>
</dbReference>
<dbReference type="InterPro" id="IPR011332">
    <property type="entry name" value="Ribosomal_zn-bd"/>
</dbReference>
<dbReference type="NCBIfam" id="NF001860">
    <property type="entry name" value="PRK00595.1"/>
    <property type="match status" value="1"/>
</dbReference>
<dbReference type="NCBIfam" id="TIGR01023">
    <property type="entry name" value="rpmG_bact"/>
    <property type="match status" value="1"/>
</dbReference>
<dbReference type="PANTHER" id="PTHR15238">
    <property type="entry name" value="54S RIBOSOMAL PROTEIN L39, MITOCHONDRIAL"/>
    <property type="match status" value="1"/>
</dbReference>
<dbReference type="PANTHER" id="PTHR15238:SF1">
    <property type="entry name" value="LARGE RIBOSOMAL SUBUNIT PROTEIN BL33M"/>
    <property type="match status" value="1"/>
</dbReference>
<dbReference type="Pfam" id="PF00471">
    <property type="entry name" value="Ribosomal_L33"/>
    <property type="match status" value="1"/>
</dbReference>
<dbReference type="SUPFAM" id="SSF57829">
    <property type="entry name" value="Zn-binding ribosomal proteins"/>
    <property type="match status" value="1"/>
</dbReference>
<dbReference type="PROSITE" id="PS00582">
    <property type="entry name" value="RIBOSOMAL_L33"/>
    <property type="match status" value="1"/>
</dbReference>
<comment type="similarity">
    <text evidence="1">Belongs to the bacterial ribosomal protein bL33 family.</text>
</comment>
<gene>
    <name evidence="1" type="primary">rpmG</name>
    <name type="ordered locus">TW126</name>
</gene>